<comment type="function">
    <text evidence="1">The pyruvate dehydrogenase complex catalyzes the overall conversion of pyruvate to acetyl-CoA and CO(2). It contains multiple copies of three enzymatic components: pyruvate dehydrogenase (E1), dihydrolipoamide acetyltransferase (E2) and lipoamide dehydrogenase (E3) (By similarity).</text>
</comment>
<comment type="catalytic activity">
    <reaction>
        <text>N(6)-[(R)-lipoyl]-L-lysyl-[protein] + pyruvate + H(+) = N(6)-[(R)-S(8)-acetyldihydrolipoyl]-L-lysyl-[protein] + CO2</text>
        <dbReference type="Rhea" id="RHEA:19189"/>
        <dbReference type="Rhea" id="RHEA-COMP:10474"/>
        <dbReference type="Rhea" id="RHEA-COMP:10478"/>
        <dbReference type="ChEBI" id="CHEBI:15361"/>
        <dbReference type="ChEBI" id="CHEBI:15378"/>
        <dbReference type="ChEBI" id="CHEBI:16526"/>
        <dbReference type="ChEBI" id="CHEBI:83099"/>
        <dbReference type="ChEBI" id="CHEBI:83111"/>
        <dbReference type="EC" id="1.2.4.1"/>
    </reaction>
</comment>
<comment type="cofactor">
    <cofactor evidence="2">
        <name>thiamine diphosphate</name>
        <dbReference type="ChEBI" id="CHEBI:58937"/>
    </cofactor>
</comment>
<comment type="subunit">
    <text evidence="1">Tetramer of 2 alpha and 2 beta subunits.</text>
</comment>
<comment type="interaction">
    <interactant intactId="EBI-4436231">
        <id>Q9C6Z3</id>
    </interactant>
    <interactant intactId="EBI-963686">
        <id>Q9LYC1</id>
        <label>GID1B</label>
    </interactant>
    <organismsDiffer>false</organismsDiffer>
    <experiments>3</experiments>
</comment>
<comment type="subcellular location">
    <subcellularLocation>
        <location evidence="4">Plastid</location>
        <location evidence="4">Chloroplast</location>
    </subcellularLocation>
</comment>
<name>ODPB2_ARATH</name>
<feature type="transit peptide" description="Chloroplast" evidence="3">
    <location>
        <begin position="1"/>
        <end position="44"/>
    </location>
</feature>
<feature type="chain" id="PRO_0000421371" description="Pyruvate dehydrogenase E1 component subunit beta-2, chloroplastic">
    <location>
        <begin position="45"/>
        <end position="406"/>
    </location>
</feature>
<feature type="binding site" evidence="2">
    <location>
        <position position="142"/>
    </location>
    <ligand>
        <name>thiamine diphosphate</name>
        <dbReference type="ChEBI" id="CHEBI:58937"/>
        <note>ligand shared with alpha subunit</note>
    </ligand>
</feature>
<feature type="binding site" evidence="2">
    <location>
        <position position="195"/>
    </location>
    <ligand>
        <name>K(+)</name>
        <dbReference type="ChEBI" id="CHEBI:29103"/>
        <note>structural</note>
    </ligand>
</feature>
<feature type="binding site" evidence="2">
    <location>
        <position position="243"/>
    </location>
    <ligand>
        <name>K(+)</name>
        <dbReference type="ChEBI" id="CHEBI:29103"/>
        <note>structural</note>
    </ligand>
</feature>
<feature type="binding site" evidence="2">
    <location>
        <position position="244"/>
    </location>
    <ligand>
        <name>K(+)</name>
        <dbReference type="ChEBI" id="CHEBI:29103"/>
        <note>structural</note>
    </ligand>
</feature>
<feature type="binding site" evidence="2">
    <location>
        <position position="248"/>
    </location>
    <ligand>
        <name>K(+)</name>
        <dbReference type="ChEBI" id="CHEBI:29103"/>
        <note>structural</note>
    </ligand>
</feature>
<feature type="sequence conflict" description="In Ref. 1; AAM65270 and 6; AAB86804." evidence="4" ref="1 6">
    <original>V</original>
    <variation>I</variation>
    <location>
        <position position="271"/>
    </location>
</feature>
<accession>Q9C6Z3</accession>
<accession>O24458</accession>
<protein>
    <recommendedName>
        <fullName>Pyruvate dehydrogenase E1 component subunit beta-2, chloroplastic</fullName>
        <ecNumber>1.2.4.1</ecNumber>
    </recommendedName>
</protein>
<evidence type="ECO:0000250" key="1"/>
<evidence type="ECO:0000250" key="2">
    <source>
        <dbReference type="UniProtKB" id="P11177"/>
    </source>
</evidence>
<evidence type="ECO:0000255" key="3"/>
<evidence type="ECO:0000305" key="4"/>
<dbReference type="EC" id="1.2.4.1"/>
<dbReference type="EMBL" id="U80186">
    <property type="protein sequence ID" value="AAB86804.1"/>
    <property type="molecule type" value="mRNA"/>
</dbReference>
<dbReference type="EMBL" id="AC074176">
    <property type="protein sequence ID" value="AAG50862.1"/>
    <property type="molecule type" value="Genomic_DNA"/>
</dbReference>
<dbReference type="EMBL" id="CP002684">
    <property type="protein sequence ID" value="AEE31181.1"/>
    <property type="molecule type" value="Genomic_DNA"/>
</dbReference>
<dbReference type="EMBL" id="AF361583">
    <property type="protein sequence ID" value="AAK32751.1"/>
    <property type="molecule type" value="mRNA"/>
</dbReference>
<dbReference type="EMBL" id="AY093988">
    <property type="protein sequence ID" value="AAM16249.1"/>
    <property type="molecule type" value="mRNA"/>
</dbReference>
<dbReference type="EMBL" id="AK221898">
    <property type="protein sequence ID" value="BAD94262.1"/>
    <property type="molecule type" value="mRNA"/>
</dbReference>
<dbReference type="EMBL" id="AY087733">
    <property type="protein sequence ID" value="AAM65270.1"/>
    <property type="molecule type" value="mRNA"/>
</dbReference>
<dbReference type="PIR" id="C86425">
    <property type="entry name" value="C86425"/>
</dbReference>
<dbReference type="RefSeq" id="NP_174304.1">
    <property type="nucleotide sequence ID" value="NM_102751.5"/>
</dbReference>
<dbReference type="SMR" id="Q9C6Z3"/>
<dbReference type="BioGRID" id="25126">
    <property type="interactions" value="20"/>
</dbReference>
<dbReference type="FunCoup" id="Q9C6Z3">
    <property type="interactions" value="504"/>
</dbReference>
<dbReference type="IntAct" id="Q9C6Z3">
    <property type="interactions" value="9"/>
</dbReference>
<dbReference type="STRING" id="3702.Q9C6Z3"/>
<dbReference type="PaxDb" id="3702-AT1G30120.1"/>
<dbReference type="ProteomicsDB" id="238918"/>
<dbReference type="EnsemblPlants" id="AT1G30120.1">
    <property type="protein sequence ID" value="AT1G30120.1"/>
    <property type="gene ID" value="AT1G30120"/>
</dbReference>
<dbReference type="GeneID" id="839891"/>
<dbReference type="Gramene" id="AT1G30120.1">
    <property type="protein sequence ID" value="AT1G30120.1"/>
    <property type="gene ID" value="AT1G30120"/>
</dbReference>
<dbReference type="KEGG" id="ath:AT1G30120"/>
<dbReference type="Araport" id="AT1G30120"/>
<dbReference type="TAIR" id="AT1G30120">
    <property type="gene designation" value="PDH-E1 BETA"/>
</dbReference>
<dbReference type="eggNOG" id="KOG0524">
    <property type="taxonomic scope" value="Eukaryota"/>
</dbReference>
<dbReference type="HOGENOM" id="CLU_012907_1_1_1"/>
<dbReference type="InParanoid" id="Q9C6Z3"/>
<dbReference type="OMA" id="YWLKGEV"/>
<dbReference type="PhylomeDB" id="Q9C6Z3"/>
<dbReference type="BioCyc" id="ARA:AT1G30120-MONOMER"/>
<dbReference type="PRO" id="PR:Q9C6Z3"/>
<dbReference type="Proteomes" id="UP000006548">
    <property type="component" value="Chromosome 1"/>
</dbReference>
<dbReference type="ExpressionAtlas" id="Q9C6Z3">
    <property type="expression patterns" value="baseline and differential"/>
</dbReference>
<dbReference type="GO" id="GO:0009507">
    <property type="term" value="C:chloroplast"/>
    <property type="evidence" value="ECO:0007005"/>
    <property type="project" value="TAIR"/>
</dbReference>
<dbReference type="GO" id="GO:0009941">
    <property type="term" value="C:chloroplast envelope"/>
    <property type="evidence" value="ECO:0007005"/>
    <property type="project" value="TAIR"/>
</dbReference>
<dbReference type="GO" id="GO:0009570">
    <property type="term" value="C:chloroplast stroma"/>
    <property type="evidence" value="ECO:0007005"/>
    <property type="project" value="TAIR"/>
</dbReference>
<dbReference type="GO" id="GO:0005634">
    <property type="term" value="C:nucleus"/>
    <property type="evidence" value="ECO:0007005"/>
    <property type="project" value="TAIR"/>
</dbReference>
<dbReference type="GO" id="GO:0046872">
    <property type="term" value="F:metal ion binding"/>
    <property type="evidence" value="ECO:0007669"/>
    <property type="project" value="UniProtKB-KW"/>
</dbReference>
<dbReference type="GO" id="GO:0004739">
    <property type="term" value="F:pyruvate dehydrogenase (acetyl-transferring) activity"/>
    <property type="evidence" value="ECO:0000304"/>
    <property type="project" value="TAIR"/>
</dbReference>
<dbReference type="GO" id="GO:0006633">
    <property type="term" value="P:fatty acid biosynthetic process"/>
    <property type="evidence" value="ECO:0000304"/>
    <property type="project" value="TAIR"/>
</dbReference>
<dbReference type="CDD" id="cd07036">
    <property type="entry name" value="TPP_PYR_E1-PDHc-beta_like"/>
    <property type="match status" value="1"/>
</dbReference>
<dbReference type="FunFam" id="3.40.50.970:FF:000001">
    <property type="entry name" value="Pyruvate dehydrogenase E1 beta subunit"/>
    <property type="match status" value="1"/>
</dbReference>
<dbReference type="FunFam" id="3.40.50.920:FF:000006">
    <property type="entry name" value="Pyruvate dehydrogenase E1 component subunit beta"/>
    <property type="match status" value="1"/>
</dbReference>
<dbReference type="Gene3D" id="3.40.50.920">
    <property type="match status" value="1"/>
</dbReference>
<dbReference type="Gene3D" id="3.40.50.970">
    <property type="match status" value="1"/>
</dbReference>
<dbReference type="InterPro" id="IPR029061">
    <property type="entry name" value="THDP-binding"/>
</dbReference>
<dbReference type="InterPro" id="IPR009014">
    <property type="entry name" value="Transketo_C/PFOR_II"/>
</dbReference>
<dbReference type="InterPro" id="IPR005475">
    <property type="entry name" value="Transketolase-like_Pyr-bd"/>
</dbReference>
<dbReference type="InterPro" id="IPR033248">
    <property type="entry name" value="Transketolase_C"/>
</dbReference>
<dbReference type="NCBIfam" id="NF006667">
    <property type="entry name" value="PRK09212.1"/>
    <property type="match status" value="1"/>
</dbReference>
<dbReference type="PANTHER" id="PTHR43257">
    <property type="entry name" value="PYRUVATE DEHYDROGENASE E1 COMPONENT BETA SUBUNIT"/>
    <property type="match status" value="1"/>
</dbReference>
<dbReference type="PANTHER" id="PTHR43257:SF2">
    <property type="entry name" value="PYRUVATE DEHYDROGENASE E1 COMPONENT SUBUNIT BETA"/>
    <property type="match status" value="1"/>
</dbReference>
<dbReference type="Pfam" id="PF02779">
    <property type="entry name" value="Transket_pyr"/>
    <property type="match status" value="1"/>
</dbReference>
<dbReference type="Pfam" id="PF02780">
    <property type="entry name" value="Transketolase_C"/>
    <property type="match status" value="1"/>
</dbReference>
<dbReference type="SMART" id="SM00861">
    <property type="entry name" value="Transket_pyr"/>
    <property type="match status" value="1"/>
</dbReference>
<dbReference type="SUPFAM" id="SSF52518">
    <property type="entry name" value="Thiamin diphosphate-binding fold (THDP-binding)"/>
    <property type="match status" value="1"/>
</dbReference>
<dbReference type="SUPFAM" id="SSF52922">
    <property type="entry name" value="TK C-terminal domain-like"/>
    <property type="match status" value="1"/>
</dbReference>
<proteinExistence type="evidence at protein level"/>
<keyword id="KW-0150">Chloroplast</keyword>
<keyword id="KW-0479">Metal-binding</keyword>
<keyword id="KW-0560">Oxidoreductase</keyword>
<keyword id="KW-0934">Plastid</keyword>
<keyword id="KW-0630">Potassium</keyword>
<keyword id="KW-0670">Pyruvate</keyword>
<keyword id="KW-1185">Reference proteome</keyword>
<keyword id="KW-0786">Thiamine pyrophosphate</keyword>
<keyword id="KW-0809">Transit peptide</keyword>
<sequence length="406" mass="44245">MSSIIHGAGAATTTLSTFNSVDSKKLFVAPSRTNLSVRSQRYIVAGSDASKKSFGSGLRVRHSQKLIPNAVATKEADTSASTGHELLLFEALQEGLEEEMDRDPHVCVMGEDVGHYGGSYKVTKGLADKFGDLRVLDTPICENAFTGMGIGAAMTGLRPVIEGMNMGFLLLAFNQISNNCGMLHYTSGGQFTIPVVIRGPGGVGRQLGAEHSQRLESYFQSIPGIQMVACSTPYNAKGLMKAAIRSENPVILFEHVLLYNLKEKIPDEDYVCNLEEAEMVRPGEHITILTYSRMRYHVMQAAKTLVNKGYDPEVIDIRSLKPFDLHTIGNSVKKTHRVLIVEECMRTGGIGASLTAAINENFHDYLDAPVMCLSSQDVPTPYAGTLEEWTVVQPAQIVTAVEQLCQ</sequence>
<gene>
    <name type="primary">PDH-E1 BETA</name>
    <name type="synonym">E1-BETA-1</name>
    <name type="ordered locus">At1g30120</name>
    <name type="ORF">T2H7.8</name>
</gene>
<organism>
    <name type="scientific">Arabidopsis thaliana</name>
    <name type="common">Mouse-ear cress</name>
    <dbReference type="NCBI Taxonomy" id="3702"/>
    <lineage>
        <taxon>Eukaryota</taxon>
        <taxon>Viridiplantae</taxon>
        <taxon>Streptophyta</taxon>
        <taxon>Embryophyta</taxon>
        <taxon>Tracheophyta</taxon>
        <taxon>Spermatophyta</taxon>
        <taxon>Magnoliopsida</taxon>
        <taxon>eudicotyledons</taxon>
        <taxon>Gunneridae</taxon>
        <taxon>Pentapetalae</taxon>
        <taxon>rosids</taxon>
        <taxon>malvids</taxon>
        <taxon>Brassicales</taxon>
        <taxon>Brassicaceae</taxon>
        <taxon>Camelineae</taxon>
        <taxon>Arabidopsis</taxon>
    </lineage>
</organism>
<reference key="1">
    <citation type="journal article" date="1997" name="Biochim. Biophys. Acta">
        <title>Cloning and molecular analyses of the Arabidopsis thaliana plastid pyruvate dehydrogenase subunits.</title>
        <authorList>
            <person name="Johnston M.L."/>
            <person name="Luethy M.H."/>
            <person name="Miernyk J.A."/>
            <person name="Randall D.D."/>
        </authorList>
    </citation>
    <scope>NUCLEOTIDE SEQUENCE [MRNA]</scope>
    <source>
        <strain>cv. Columbia</strain>
    </source>
</reference>
<reference key="2">
    <citation type="journal article" date="2000" name="Nature">
        <title>Sequence and analysis of chromosome 1 of the plant Arabidopsis thaliana.</title>
        <authorList>
            <person name="Theologis A."/>
            <person name="Ecker J.R."/>
            <person name="Palm C.J."/>
            <person name="Federspiel N.A."/>
            <person name="Kaul S."/>
            <person name="White O."/>
            <person name="Alonso J."/>
            <person name="Altafi H."/>
            <person name="Araujo R."/>
            <person name="Bowman C.L."/>
            <person name="Brooks S.Y."/>
            <person name="Buehler E."/>
            <person name="Chan A."/>
            <person name="Chao Q."/>
            <person name="Chen H."/>
            <person name="Cheuk R.F."/>
            <person name="Chin C.W."/>
            <person name="Chung M.K."/>
            <person name="Conn L."/>
            <person name="Conway A.B."/>
            <person name="Conway A.R."/>
            <person name="Creasy T.H."/>
            <person name="Dewar K."/>
            <person name="Dunn P."/>
            <person name="Etgu P."/>
            <person name="Feldblyum T.V."/>
            <person name="Feng J.-D."/>
            <person name="Fong B."/>
            <person name="Fujii C.Y."/>
            <person name="Gill J.E."/>
            <person name="Goldsmith A.D."/>
            <person name="Haas B."/>
            <person name="Hansen N.F."/>
            <person name="Hughes B."/>
            <person name="Huizar L."/>
            <person name="Hunter J.L."/>
            <person name="Jenkins J."/>
            <person name="Johnson-Hopson C."/>
            <person name="Khan S."/>
            <person name="Khaykin E."/>
            <person name="Kim C.J."/>
            <person name="Koo H.L."/>
            <person name="Kremenetskaia I."/>
            <person name="Kurtz D.B."/>
            <person name="Kwan A."/>
            <person name="Lam B."/>
            <person name="Langin-Hooper S."/>
            <person name="Lee A."/>
            <person name="Lee J.M."/>
            <person name="Lenz C.A."/>
            <person name="Li J.H."/>
            <person name="Li Y.-P."/>
            <person name="Lin X."/>
            <person name="Liu S.X."/>
            <person name="Liu Z.A."/>
            <person name="Luros J.S."/>
            <person name="Maiti R."/>
            <person name="Marziali A."/>
            <person name="Militscher J."/>
            <person name="Miranda M."/>
            <person name="Nguyen M."/>
            <person name="Nierman W.C."/>
            <person name="Osborne B.I."/>
            <person name="Pai G."/>
            <person name="Peterson J."/>
            <person name="Pham P.K."/>
            <person name="Rizzo M."/>
            <person name="Rooney T."/>
            <person name="Rowley D."/>
            <person name="Sakano H."/>
            <person name="Salzberg S.L."/>
            <person name="Schwartz J.R."/>
            <person name="Shinn P."/>
            <person name="Southwick A.M."/>
            <person name="Sun H."/>
            <person name="Tallon L.J."/>
            <person name="Tambunga G."/>
            <person name="Toriumi M.J."/>
            <person name="Town C.D."/>
            <person name="Utterback T."/>
            <person name="Van Aken S."/>
            <person name="Vaysberg M."/>
            <person name="Vysotskaia V.S."/>
            <person name="Walker M."/>
            <person name="Wu D."/>
            <person name="Yu G."/>
            <person name="Fraser C.M."/>
            <person name="Venter J.C."/>
            <person name="Davis R.W."/>
        </authorList>
    </citation>
    <scope>NUCLEOTIDE SEQUENCE [LARGE SCALE GENOMIC DNA]</scope>
    <source>
        <strain>cv. Columbia</strain>
    </source>
</reference>
<reference key="3">
    <citation type="journal article" date="2017" name="Plant J.">
        <title>Araport11: a complete reannotation of the Arabidopsis thaliana reference genome.</title>
        <authorList>
            <person name="Cheng C.Y."/>
            <person name="Krishnakumar V."/>
            <person name="Chan A.P."/>
            <person name="Thibaud-Nissen F."/>
            <person name="Schobel S."/>
            <person name="Town C.D."/>
        </authorList>
    </citation>
    <scope>GENOME REANNOTATION</scope>
    <source>
        <strain>cv. Columbia</strain>
    </source>
</reference>
<reference key="4">
    <citation type="journal article" date="2003" name="Science">
        <title>Empirical analysis of transcriptional activity in the Arabidopsis genome.</title>
        <authorList>
            <person name="Yamada K."/>
            <person name="Lim J."/>
            <person name="Dale J.M."/>
            <person name="Chen H."/>
            <person name="Shinn P."/>
            <person name="Palm C.J."/>
            <person name="Southwick A.M."/>
            <person name="Wu H.C."/>
            <person name="Kim C.J."/>
            <person name="Nguyen M."/>
            <person name="Pham P.K."/>
            <person name="Cheuk R.F."/>
            <person name="Karlin-Newmann G."/>
            <person name="Liu S.X."/>
            <person name="Lam B."/>
            <person name="Sakano H."/>
            <person name="Wu T."/>
            <person name="Yu G."/>
            <person name="Miranda M."/>
            <person name="Quach H.L."/>
            <person name="Tripp M."/>
            <person name="Chang C.H."/>
            <person name="Lee J.M."/>
            <person name="Toriumi M.J."/>
            <person name="Chan M.M."/>
            <person name="Tang C.C."/>
            <person name="Onodera C.S."/>
            <person name="Deng J.M."/>
            <person name="Akiyama K."/>
            <person name="Ansari Y."/>
            <person name="Arakawa T."/>
            <person name="Banh J."/>
            <person name="Banno F."/>
            <person name="Bowser L."/>
            <person name="Brooks S.Y."/>
            <person name="Carninci P."/>
            <person name="Chao Q."/>
            <person name="Choy N."/>
            <person name="Enju A."/>
            <person name="Goldsmith A.D."/>
            <person name="Gurjal M."/>
            <person name="Hansen N.F."/>
            <person name="Hayashizaki Y."/>
            <person name="Johnson-Hopson C."/>
            <person name="Hsuan V.W."/>
            <person name="Iida K."/>
            <person name="Karnes M."/>
            <person name="Khan S."/>
            <person name="Koesema E."/>
            <person name="Ishida J."/>
            <person name="Jiang P.X."/>
            <person name="Jones T."/>
            <person name="Kawai J."/>
            <person name="Kamiya A."/>
            <person name="Meyers C."/>
            <person name="Nakajima M."/>
            <person name="Narusaka M."/>
            <person name="Seki M."/>
            <person name="Sakurai T."/>
            <person name="Satou M."/>
            <person name="Tamse R."/>
            <person name="Vaysberg M."/>
            <person name="Wallender E.K."/>
            <person name="Wong C."/>
            <person name="Yamamura Y."/>
            <person name="Yuan S."/>
            <person name="Shinozaki K."/>
            <person name="Davis R.W."/>
            <person name="Theologis A."/>
            <person name="Ecker J.R."/>
        </authorList>
    </citation>
    <scope>NUCLEOTIDE SEQUENCE [LARGE SCALE MRNA]</scope>
    <source>
        <strain>cv. Columbia</strain>
    </source>
</reference>
<reference key="5">
    <citation type="submission" date="2005-03" db="EMBL/GenBank/DDBJ databases">
        <title>Large-scale analysis of RIKEN Arabidopsis full-length (RAFL) cDNAs.</title>
        <authorList>
            <person name="Totoki Y."/>
            <person name="Seki M."/>
            <person name="Ishida J."/>
            <person name="Nakajima M."/>
            <person name="Enju A."/>
            <person name="Kamiya A."/>
            <person name="Narusaka M."/>
            <person name="Shin-i T."/>
            <person name="Nakagawa M."/>
            <person name="Sakamoto N."/>
            <person name="Oishi K."/>
            <person name="Kohara Y."/>
            <person name="Kobayashi M."/>
            <person name="Toyoda A."/>
            <person name="Sakaki Y."/>
            <person name="Sakurai T."/>
            <person name="Iida K."/>
            <person name="Akiyama K."/>
            <person name="Satou M."/>
            <person name="Toyoda T."/>
            <person name="Konagaya A."/>
            <person name="Carninci P."/>
            <person name="Kawai J."/>
            <person name="Hayashizaki Y."/>
            <person name="Shinozaki K."/>
        </authorList>
    </citation>
    <scope>NUCLEOTIDE SEQUENCE [LARGE SCALE MRNA]</scope>
    <source>
        <strain>cv. Columbia</strain>
    </source>
</reference>
<reference key="6">
    <citation type="submission" date="2002-03" db="EMBL/GenBank/DDBJ databases">
        <title>Full-length cDNA from Arabidopsis thaliana.</title>
        <authorList>
            <person name="Brover V.V."/>
            <person name="Troukhan M.E."/>
            <person name="Alexandrov N.A."/>
            <person name="Lu Y.-P."/>
            <person name="Flavell R.B."/>
            <person name="Feldmann K.A."/>
        </authorList>
    </citation>
    <scope>NUCLEOTIDE SEQUENCE [LARGE SCALE MRNA]</scope>
</reference>